<sequence length="1033" mass="114230">MTARMISIYGLVLASMMASVWASSSRFQRLPQSQSVVENESVKFECESTDSYSELHYDWLHNGHRIAYDKRVHQIGSNLHIEAARRTEDVGSYVCIATNLASGAREASPPAKLSVIYLESASVQLLGSNRNELLLKCHVEGASGDSEPLEIEWYRNSEKLSTWKNVQLDQHRLIIRQPGSDDDGLYRCTASNAAGRVMSKQGYAYQSSVKCLPRLARRKNQKMMESWDKQTFLCRGKRGGAAGLEALPAAPEDLRIVQGPVGQSIIKEGEPTALTCLYELPDELKNQRIQLRWRKDGKLLRQVELGGSAPITGHSFDSGKDALLREDARLVLHKQNGTLSFASIIASDAGQYQCQLQLEGHLPISSTPGVLEVIEQLKFVPQPTSKNLELDAVVAKVHCKAQGTPTPQVQWVRDGENSTLPDQVEVDANGTLIFRNVNSEHRGNYTCLASNTQGQINATVAINVVVTPKFSVPPVGPIETSEQGTVVMHCQAIGDPKPTIQWDKDLKYLSENNTDRERFRFLENGTLEIRNVQVEDEGSYGCTIGNSAGLKREDVQLVVKTTGDGFAPEESGGDGFLVTRAVLITMTVALAYIVLVVGLMLWCRYRRQARKARLNDLSTKEAGGDQPDAAGNGKGSEQEPCLSKQHNGHSKSRSKSSGDAQKSDDTACSQQSRASKKSAHIYEQLALPRSGLSELIQIGRGEFGDVFVGKLKATLVTSPTDKDADTEKQHSNSENGSGGSGSGSTTLSTLNEKRRSKTSMDDIEEIKEEEQEQHNQSALEQLVLVKALNKVKDEQACQEFRRQLDLLRAISHKGVVRLFGLCREKDPHYMVLEYTDWGDLKQFLLATAGKVNTATAGSSSPPPLTTSQVLAVAYQIARGMDAIYRARFTHRDLATRNCVISSEFIVKVSYPALCKDKYSREYHKHRNTLLPIRWLAPECIQEDEYTTKSDIFAYGVVVWELFNQATKLPHEELTNEQVVQRSQAGSLEWSVAEATPDSLREILLSCWVSNPKERPSFSQLGAALSKAMQSVEK</sequence>
<accession>B3NS99</accession>
<gene>
    <name evidence="2" type="primary">otk</name>
    <name type="ORF">GG22613</name>
</gene>
<proteinExistence type="inferred from homology"/>
<protein>
    <recommendedName>
        <fullName evidence="2">Tyrosine-protein kinase-like otk</fullName>
    </recommendedName>
    <alternativeName>
        <fullName>Tyrosine-protein kinase-like 7 homolog</fullName>
    </alternativeName>
</protein>
<keyword id="KW-0130">Cell adhesion</keyword>
<keyword id="KW-1003">Cell membrane</keyword>
<keyword id="KW-1015">Disulfide bond</keyword>
<keyword id="KW-0325">Glycoprotein</keyword>
<keyword id="KW-0393">Immunoglobulin domain</keyword>
<keyword id="KW-0472">Membrane</keyword>
<keyword id="KW-0524">Neurogenesis</keyword>
<keyword id="KW-0597">Phosphoprotein</keyword>
<keyword id="KW-0675">Receptor</keyword>
<keyword id="KW-0677">Repeat</keyword>
<keyword id="KW-0732">Signal</keyword>
<keyword id="KW-0812">Transmembrane</keyword>
<keyword id="KW-1133">Transmembrane helix</keyword>
<organism>
    <name type="scientific">Drosophila erecta</name>
    <name type="common">Fruit fly</name>
    <dbReference type="NCBI Taxonomy" id="7220"/>
    <lineage>
        <taxon>Eukaryota</taxon>
        <taxon>Metazoa</taxon>
        <taxon>Ecdysozoa</taxon>
        <taxon>Arthropoda</taxon>
        <taxon>Hexapoda</taxon>
        <taxon>Insecta</taxon>
        <taxon>Pterygota</taxon>
        <taxon>Neoptera</taxon>
        <taxon>Endopterygota</taxon>
        <taxon>Diptera</taxon>
        <taxon>Brachycera</taxon>
        <taxon>Muscomorpha</taxon>
        <taxon>Ephydroidea</taxon>
        <taxon>Drosophilidae</taxon>
        <taxon>Drosophila</taxon>
        <taxon>Sophophora</taxon>
    </lineage>
</organism>
<evidence type="ECO:0000250" key="1"/>
<evidence type="ECO:0000250" key="2">
    <source>
        <dbReference type="UniProtKB" id="Q6AWJ9"/>
    </source>
</evidence>
<evidence type="ECO:0000255" key="3"/>
<evidence type="ECO:0000255" key="4">
    <source>
        <dbReference type="PROSITE-ProRule" id="PRU00114"/>
    </source>
</evidence>
<evidence type="ECO:0000255" key="5">
    <source>
        <dbReference type="PROSITE-ProRule" id="PRU00159"/>
    </source>
</evidence>
<evidence type="ECO:0000256" key="6">
    <source>
        <dbReference type="SAM" id="MobiDB-lite"/>
    </source>
</evidence>
<evidence type="ECO:0000305" key="7"/>
<evidence type="ECO:0000312" key="8">
    <source>
        <dbReference type="EMBL" id="EDV56401.1"/>
    </source>
</evidence>
<dbReference type="EMBL" id="CH954179">
    <property type="protein sequence ID" value="EDV56401.1"/>
    <property type="molecule type" value="Genomic_DNA"/>
</dbReference>
<dbReference type="SMR" id="B3NS99"/>
<dbReference type="GlyCosmos" id="B3NS99">
    <property type="glycosylation" value="8 sites, No reported glycans"/>
</dbReference>
<dbReference type="EnsemblMetazoa" id="FBtr0142667">
    <property type="protein sequence ID" value="FBpp0141159"/>
    <property type="gene ID" value="FBgn0114784"/>
</dbReference>
<dbReference type="EnsemblMetazoa" id="XM_001975965.3">
    <property type="protein sequence ID" value="XP_001976001.1"/>
    <property type="gene ID" value="LOC6546774"/>
</dbReference>
<dbReference type="GeneID" id="6546774"/>
<dbReference type="KEGG" id="der:6546774"/>
<dbReference type="CTD" id="36283"/>
<dbReference type="eggNOG" id="KOG1026">
    <property type="taxonomic scope" value="Eukaryota"/>
</dbReference>
<dbReference type="eggNOG" id="KOG4475">
    <property type="taxonomic scope" value="Eukaryota"/>
</dbReference>
<dbReference type="HOGENOM" id="CLU_012268_0_0_1"/>
<dbReference type="OMA" id="SHLHIEA"/>
<dbReference type="OrthoDB" id="2413561at2759"/>
<dbReference type="PhylomeDB" id="B3NS99"/>
<dbReference type="ChiTaRS" id="otk">
    <property type="organism name" value="fly"/>
</dbReference>
<dbReference type="Proteomes" id="UP000008711">
    <property type="component" value="Unassembled WGS sequence"/>
</dbReference>
<dbReference type="GO" id="GO:0030424">
    <property type="term" value="C:axon"/>
    <property type="evidence" value="ECO:0007669"/>
    <property type="project" value="EnsemblMetazoa"/>
</dbReference>
<dbReference type="GO" id="GO:0005886">
    <property type="term" value="C:plasma membrane"/>
    <property type="evidence" value="ECO:0000250"/>
    <property type="project" value="UniProtKB"/>
</dbReference>
<dbReference type="GO" id="GO:0043235">
    <property type="term" value="C:receptor complex"/>
    <property type="evidence" value="ECO:0007669"/>
    <property type="project" value="TreeGrafter"/>
</dbReference>
<dbReference type="GO" id="GO:0005524">
    <property type="term" value="F:ATP binding"/>
    <property type="evidence" value="ECO:0007669"/>
    <property type="project" value="InterPro"/>
</dbReference>
<dbReference type="GO" id="GO:0050839">
    <property type="term" value="F:cell adhesion molecule binding"/>
    <property type="evidence" value="ECO:0000250"/>
    <property type="project" value="UniProtKB"/>
</dbReference>
<dbReference type="GO" id="GO:0046982">
    <property type="term" value="F:protein heterodimerization activity"/>
    <property type="evidence" value="ECO:0007669"/>
    <property type="project" value="EnsemblMetazoa"/>
</dbReference>
<dbReference type="GO" id="GO:0042803">
    <property type="term" value="F:protein homodimerization activity"/>
    <property type="evidence" value="ECO:0007669"/>
    <property type="project" value="EnsemblMetazoa"/>
</dbReference>
<dbReference type="GO" id="GO:0004672">
    <property type="term" value="F:protein kinase activity"/>
    <property type="evidence" value="ECO:0000250"/>
    <property type="project" value="UniProtKB"/>
</dbReference>
<dbReference type="GO" id="GO:0038023">
    <property type="term" value="F:signaling receptor activity"/>
    <property type="evidence" value="ECO:0000250"/>
    <property type="project" value="UniProtKB"/>
</dbReference>
<dbReference type="GO" id="GO:0004714">
    <property type="term" value="F:transmembrane receptor protein tyrosine kinase activity"/>
    <property type="evidence" value="ECO:0007669"/>
    <property type="project" value="EnsemblMetazoa"/>
</dbReference>
<dbReference type="GO" id="GO:0017147">
    <property type="term" value="F:Wnt-protein binding"/>
    <property type="evidence" value="ECO:0007669"/>
    <property type="project" value="EnsemblMetazoa"/>
</dbReference>
<dbReference type="GO" id="GO:0007155">
    <property type="term" value="P:cell adhesion"/>
    <property type="evidence" value="ECO:0000250"/>
    <property type="project" value="UniProtKB"/>
</dbReference>
<dbReference type="GO" id="GO:0007169">
    <property type="term" value="P:cell surface receptor protein tyrosine kinase signaling pathway"/>
    <property type="evidence" value="ECO:0007669"/>
    <property type="project" value="TreeGrafter"/>
</dbReference>
<dbReference type="GO" id="GO:0048804">
    <property type="term" value="P:imaginal disc-derived female genitalia morphogenesis"/>
    <property type="evidence" value="ECO:0007669"/>
    <property type="project" value="EnsemblMetazoa"/>
</dbReference>
<dbReference type="GO" id="GO:0048803">
    <property type="term" value="P:imaginal disc-derived male genitalia morphogenesis"/>
    <property type="evidence" value="ECO:0007669"/>
    <property type="project" value="EnsemblMetazoa"/>
</dbReference>
<dbReference type="GO" id="GO:0035260">
    <property type="term" value="P:internal genitalia morphogenesis"/>
    <property type="evidence" value="ECO:0007669"/>
    <property type="project" value="EnsemblMetazoa"/>
</dbReference>
<dbReference type="GO" id="GO:0090090">
    <property type="term" value="P:negative regulation of canonical Wnt signaling pathway"/>
    <property type="evidence" value="ECO:0007669"/>
    <property type="project" value="EnsemblMetazoa"/>
</dbReference>
<dbReference type="GO" id="GO:0072499">
    <property type="term" value="P:photoreceptor cell axon guidance"/>
    <property type="evidence" value="ECO:0007669"/>
    <property type="project" value="EnsemblMetazoa"/>
</dbReference>
<dbReference type="GO" id="GO:0031290">
    <property type="term" value="P:retinal ganglion cell axon guidance"/>
    <property type="evidence" value="ECO:0000250"/>
    <property type="project" value="UniProtKB"/>
</dbReference>
<dbReference type="CDD" id="cd00096">
    <property type="entry name" value="Ig"/>
    <property type="match status" value="2"/>
</dbReference>
<dbReference type="CDD" id="cd05046">
    <property type="entry name" value="PTK_CCK4"/>
    <property type="match status" value="1"/>
</dbReference>
<dbReference type="FunFam" id="1.10.510.10:FF:000954">
    <property type="entry name" value="Tyrosine-protein kinase-like otk"/>
    <property type="match status" value="1"/>
</dbReference>
<dbReference type="FunFam" id="2.60.40.10:FF:001805">
    <property type="entry name" value="Tyrosine-protein kinase-like otk"/>
    <property type="match status" value="1"/>
</dbReference>
<dbReference type="FunFam" id="2.60.40.10:FF:002027">
    <property type="entry name" value="Tyrosine-protein kinase-like otk"/>
    <property type="match status" value="1"/>
</dbReference>
<dbReference type="FunFam" id="2.60.40.10:FF:002086">
    <property type="entry name" value="Tyrosine-protein kinase-like otk"/>
    <property type="match status" value="1"/>
</dbReference>
<dbReference type="FunFam" id="2.60.40.10:FF:002809">
    <property type="entry name" value="Tyrosine-protein kinase-like otk"/>
    <property type="match status" value="1"/>
</dbReference>
<dbReference type="FunFam" id="3.30.200.20:FF:001776">
    <property type="entry name" value="Tyrosine-protein kinase-like otk"/>
    <property type="match status" value="1"/>
</dbReference>
<dbReference type="FunFam" id="2.60.40.10:FF:002127">
    <property type="entry name" value="tyrosine-protein kinase-like otk"/>
    <property type="match status" value="1"/>
</dbReference>
<dbReference type="Gene3D" id="2.60.40.10">
    <property type="entry name" value="Immunoglobulins"/>
    <property type="match status" value="5"/>
</dbReference>
<dbReference type="Gene3D" id="1.10.510.10">
    <property type="entry name" value="Transferase(Phosphotransferase) domain 1"/>
    <property type="match status" value="1"/>
</dbReference>
<dbReference type="InterPro" id="IPR007110">
    <property type="entry name" value="Ig-like_dom"/>
</dbReference>
<dbReference type="InterPro" id="IPR036179">
    <property type="entry name" value="Ig-like_dom_sf"/>
</dbReference>
<dbReference type="InterPro" id="IPR013783">
    <property type="entry name" value="Ig-like_fold"/>
</dbReference>
<dbReference type="InterPro" id="IPR013098">
    <property type="entry name" value="Ig_I-set"/>
</dbReference>
<dbReference type="InterPro" id="IPR003599">
    <property type="entry name" value="Ig_sub"/>
</dbReference>
<dbReference type="InterPro" id="IPR003598">
    <property type="entry name" value="Ig_sub2"/>
</dbReference>
<dbReference type="InterPro" id="IPR011009">
    <property type="entry name" value="Kinase-like_dom_sf"/>
</dbReference>
<dbReference type="InterPro" id="IPR000719">
    <property type="entry name" value="Prot_kinase_dom"/>
</dbReference>
<dbReference type="InterPro" id="IPR050122">
    <property type="entry name" value="RTK"/>
</dbReference>
<dbReference type="InterPro" id="IPR001245">
    <property type="entry name" value="Ser-Thr/Tyr_kinase_cat_dom"/>
</dbReference>
<dbReference type="InterPro" id="IPR008266">
    <property type="entry name" value="Tyr_kinase_AS"/>
</dbReference>
<dbReference type="InterPro" id="IPR020635">
    <property type="entry name" value="Tyr_kinase_cat_dom"/>
</dbReference>
<dbReference type="PANTHER" id="PTHR24416">
    <property type="entry name" value="TYROSINE-PROTEIN KINASE RECEPTOR"/>
    <property type="match status" value="1"/>
</dbReference>
<dbReference type="PANTHER" id="PTHR24416:SF611">
    <property type="entry name" value="TYROSINE-PROTEIN KINASE TRANSMEMBRANE RECEPTOR ROR"/>
    <property type="match status" value="1"/>
</dbReference>
<dbReference type="Pfam" id="PF07679">
    <property type="entry name" value="I-set"/>
    <property type="match status" value="1"/>
</dbReference>
<dbReference type="Pfam" id="PF13927">
    <property type="entry name" value="Ig_3"/>
    <property type="match status" value="3"/>
</dbReference>
<dbReference type="Pfam" id="PF07714">
    <property type="entry name" value="PK_Tyr_Ser-Thr"/>
    <property type="match status" value="1"/>
</dbReference>
<dbReference type="PIRSF" id="PIRSF000615">
    <property type="entry name" value="TyrPK_CSF1-R"/>
    <property type="match status" value="1"/>
</dbReference>
<dbReference type="PRINTS" id="PR00109">
    <property type="entry name" value="TYRKINASE"/>
</dbReference>
<dbReference type="SMART" id="SM00409">
    <property type="entry name" value="IG"/>
    <property type="match status" value="5"/>
</dbReference>
<dbReference type="SMART" id="SM00408">
    <property type="entry name" value="IGc2"/>
    <property type="match status" value="5"/>
</dbReference>
<dbReference type="SMART" id="SM00219">
    <property type="entry name" value="TyrKc"/>
    <property type="match status" value="1"/>
</dbReference>
<dbReference type="SUPFAM" id="SSF48726">
    <property type="entry name" value="Immunoglobulin"/>
    <property type="match status" value="4"/>
</dbReference>
<dbReference type="SUPFAM" id="SSF56112">
    <property type="entry name" value="Protein kinase-like (PK-like)"/>
    <property type="match status" value="1"/>
</dbReference>
<dbReference type="PROSITE" id="PS50835">
    <property type="entry name" value="IG_LIKE"/>
    <property type="match status" value="5"/>
</dbReference>
<dbReference type="PROSITE" id="PS50011">
    <property type="entry name" value="PROTEIN_KINASE_DOM"/>
    <property type="match status" value="1"/>
</dbReference>
<dbReference type="PROSITE" id="PS00109">
    <property type="entry name" value="PROTEIN_KINASE_TYR"/>
    <property type="match status" value="1"/>
</dbReference>
<reference evidence="8" key="1">
    <citation type="journal article" date="2007" name="Nature">
        <title>Evolution of genes and genomes on the Drosophila phylogeny.</title>
        <authorList>
            <consortium name="Drosophila 12 genomes consortium"/>
        </authorList>
    </citation>
    <scope>NUCLEOTIDE SEQUENCE [LARGE SCALE GENOMIC DNA]</scope>
    <source>
        <strain evidence="8">Tucson 14021-0224.01</strain>
    </source>
</reference>
<feature type="signal peptide" evidence="3">
    <location>
        <begin position="1"/>
        <end position="22"/>
    </location>
</feature>
<feature type="chain" id="PRO_0000388687" description="Tyrosine-protein kinase-like otk" evidence="3">
    <location>
        <begin position="23"/>
        <end position="1033"/>
    </location>
</feature>
<feature type="topological domain" description="Extracellular" evidence="3">
    <location>
        <begin position="23"/>
        <end position="581"/>
    </location>
</feature>
<feature type="transmembrane region" description="Helical" evidence="3">
    <location>
        <begin position="582"/>
        <end position="602"/>
    </location>
</feature>
<feature type="topological domain" description="Cytoplasmic" evidence="3">
    <location>
        <begin position="603"/>
        <end position="1033"/>
    </location>
</feature>
<feature type="domain" description="Ig-like C2-type 1" evidence="3">
    <location>
        <begin position="25"/>
        <end position="108"/>
    </location>
</feature>
<feature type="domain" description="Ig-like C2-type 2" evidence="3">
    <location>
        <begin position="109"/>
        <end position="199"/>
    </location>
</feature>
<feature type="domain" description="Ig-like C2-type 3" evidence="3">
    <location>
        <begin position="251"/>
        <end position="365"/>
    </location>
</feature>
<feature type="domain" description="Ig-like C2-type 4" evidence="3">
    <location>
        <begin position="368"/>
        <end position="463"/>
    </location>
</feature>
<feature type="domain" description="Ig-like C2-type 5" evidence="3">
    <location>
        <begin position="468"/>
        <end position="558"/>
    </location>
</feature>
<feature type="domain" description="Protein kinase; inactive" evidence="5 7">
    <location>
        <begin position="692"/>
        <end position="1028"/>
    </location>
</feature>
<feature type="region of interest" description="Disordered" evidence="6">
    <location>
        <begin position="617"/>
        <end position="679"/>
    </location>
</feature>
<feature type="region of interest" description="Disordered" evidence="6">
    <location>
        <begin position="718"/>
        <end position="760"/>
    </location>
</feature>
<feature type="compositionally biased region" description="Polar residues" evidence="6">
    <location>
        <begin position="655"/>
        <end position="673"/>
    </location>
</feature>
<feature type="compositionally biased region" description="Basic and acidic residues" evidence="6">
    <location>
        <begin position="720"/>
        <end position="731"/>
    </location>
</feature>
<feature type="modified residue" description="Phosphoserine" evidence="2">
    <location>
        <position position="678"/>
    </location>
</feature>
<feature type="glycosylation site" description="N-linked (GlcNAc...) asparagine" evidence="3">
    <location>
        <position position="39"/>
    </location>
</feature>
<feature type="glycosylation site" description="N-linked (GlcNAc...) asparagine" evidence="3">
    <location>
        <position position="336"/>
    </location>
</feature>
<feature type="glycosylation site" description="N-linked (GlcNAc...) asparagine" evidence="3">
    <location>
        <position position="417"/>
    </location>
</feature>
<feature type="glycosylation site" description="N-linked (GlcNAc...) asparagine" evidence="3">
    <location>
        <position position="429"/>
    </location>
</feature>
<feature type="glycosylation site" description="N-linked (GlcNAc...) asparagine" evidence="3">
    <location>
        <position position="444"/>
    </location>
</feature>
<feature type="glycosylation site" description="N-linked (GlcNAc...) asparagine" evidence="3">
    <location>
        <position position="457"/>
    </location>
</feature>
<feature type="glycosylation site" description="N-linked (GlcNAc...) asparagine" evidence="3">
    <location>
        <position position="512"/>
    </location>
</feature>
<feature type="glycosylation site" description="N-linked (GlcNAc...) asparagine" evidence="3">
    <location>
        <position position="524"/>
    </location>
</feature>
<feature type="disulfide bond" evidence="4">
    <location>
        <begin position="46"/>
        <end position="95"/>
    </location>
</feature>
<feature type="disulfide bond" evidence="4">
    <location>
        <begin position="137"/>
        <end position="188"/>
    </location>
</feature>
<feature type="disulfide bond" evidence="4">
    <location>
        <begin position="276"/>
        <end position="354"/>
    </location>
</feature>
<feature type="disulfide bond" evidence="4">
    <location>
        <begin position="399"/>
        <end position="447"/>
    </location>
</feature>
<feature type="disulfide bond" evidence="4">
    <location>
        <begin position="490"/>
        <end position="542"/>
    </location>
</feature>
<comment type="function">
    <text evidence="1">Acts as a calcium-dependent, homophilic cell adhesion molecule that regulates neural recognition during the development of the nervous system. Component of the repulsive Plexin signaling response to regulate motor axon guidance at the embryonic stage. Also component of a receptor complex that is required in the adult visual system to innervate the lamina layer; specific targeting of R1-R6 axons (By similarity).</text>
</comment>
<comment type="subunit">
    <text evidence="1">Interacts with plexA; component of a receptor complex that mediates the repulsive signaling in response to Semaphorin ligands.</text>
</comment>
<comment type="subcellular location">
    <subcellularLocation>
        <location evidence="2">Cell membrane</location>
        <topology evidence="2">Single-pass type I membrane protein</topology>
    </subcellularLocation>
</comment>
<comment type="similarity">
    <text evidence="5">Belongs to the protein kinase superfamily. Tyr protein kinase family. Insulin receptor subfamily.</text>
</comment>
<comment type="caution">
    <text evidence="7">The D.melanogaster ortholog of this protein has been proposed to undergo autophosphorylation on tyrosine residues which is induced in response to cell adhesion (PubMed:1371458). However as mammalian orthologs of this protein seem to lack kinase activity this protein may associate with, and be phosphorylated by, an unknown active tyrosine kinase.</text>
</comment>
<name>PTK7_DROER</name>